<sequence>MKSRQKGKKKGSAKERVFGCDLQEHLQHSGQEVPQVLKSCAEFVEEYGVVDGIYRLSGVSSNIQKLRQEFESERKPDLRRDVYLQDIHCVSSLCKAYFRELPDPLLTYRLYDKFAEAVGVQLEPERLVKILEVLRELPVPNYRTLEFLMRHLVHMASFSAQTNMHARNLAIVWAPNLLRSKDIEASGFNGTAAFMEVRVQSIVVEFILTHVDQLFGGAALSGGEVESGWRSLPGTRASGSPEDLMPRPLPYHLPSILQAGDGPPQMRPYHTIIEIAEHKRKGSLKVRKWRSIFNLGRSGHETKRKLPRGAEDREDKSNKGTLRPAKSMDSLSAAAGASDEPEGLVGPSSPRPSPLLPESLENDSIEAAEGEQEPEAEALGGTNSEPGTPRAGRSAIRAGGSSRAERCAGVHISDPYNVNLPLHITSILSVPPNIISNVSLARLTRGLECPALQHRPSPASGPGPGPGLGPGPPDEKLEASPASSPLADSGPDDLAPALEDSLSQEVQDSFSFLEDSSSSEPEWVGAEDGEVAQAEAAGAAFSPGEDDPGMGYLEELLGVGPQVEEFSVEPPLDDLSLDEAQFVLAPSCCSLDSAGPRPEVEEENGEEVFLSAYDDLSPLLGPKPPIWKGSGSLEGEAAGCGRQALGQGGEEQACWEVGEDKQAEPGGRLDIREEAEGSPETKVEAGKASEDRGEAGGSQETKVRLREGSREETEAKEEKSKGQKKADSMEAKGVEEPGGDEYTDEKEKEIEREEDEQREEAQVEAGRDLEQGAQEDQVAEEKWEVVQKQEAEGVREDEDKGQREKGYHEARKDQGDGEDSRSPEAATEGGAGEVSKERESGDGEAEGDQRAGGYYLEEDTLSEGSGVASLEVDCAKEGNPHSSEMEEVAPQPPQPEEMEPEGQPSPDGCLCPCSLGLGGVGMRLASTLVQVQQVRSVPVVPPKPQFAKMPSAMCSKIHVAPANPCPRPGRLDGTPGERAWGSRASRSSWRNGGSLSFDAAVALARDRQRTEAQGVRRTQTCTEGGDYCLIPRTSPCSMISAHSPRPLSCLELPSEGAEGSGSRSRLSLPPREPQVPDPLLSSQRRSYAFETQANPGKGEGL</sequence>
<dbReference type="EMBL" id="AK160366">
    <property type="protein sequence ID" value="BAD18709.1"/>
    <property type="status" value="ALT_INIT"/>
    <property type="molecule type" value="mRNA"/>
</dbReference>
<dbReference type="EMBL" id="BX537846">
    <property type="protein sequence ID" value="CAD97855.1"/>
    <property type="molecule type" value="mRNA"/>
</dbReference>
<dbReference type="EMBL" id="AL591806">
    <property type="status" value="NOT_ANNOTATED_CDS"/>
    <property type="molecule type" value="Genomic_DNA"/>
</dbReference>
<dbReference type="EMBL" id="BC043387">
    <property type="protein sequence ID" value="AAH43387.1"/>
    <property type="status" value="ALT_SEQ"/>
    <property type="molecule type" value="mRNA"/>
</dbReference>
<dbReference type="EMBL" id="BC053688">
    <property type="protein sequence ID" value="AAH53688.1"/>
    <property type="molecule type" value="mRNA"/>
</dbReference>
<dbReference type="CCDS" id="CCDS1215.1">
    <molecule id="Q7Z6I6-2"/>
</dbReference>
<dbReference type="CCDS" id="CCDS30918.1">
    <molecule id="Q7Z6I6-1"/>
</dbReference>
<dbReference type="RefSeq" id="NP_001020769.1">
    <molecule id="Q7Z6I6-1"/>
    <property type="nucleotide sequence ID" value="NM_001025598.2"/>
</dbReference>
<dbReference type="RefSeq" id="NP_001274529.1">
    <molecule id="Q7Z6I6-3"/>
    <property type="nucleotide sequence ID" value="NM_001287600.2"/>
</dbReference>
<dbReference type="RefSeq" id="NP_001274531.1">
    <property type="nucleotide sequence ID" value="NM_001287602.1"/>
</dbReference>
<dbReference type="RefSeq" id="NP_859071.2">
    <property type="nucleotide sequence ID" value="NM_181720.2"/>
</dbReference>
<dbReference type="RefSeq" id="XP_005245130.1">
    <molecule id="Q7Z6I6-3"/>
    <property type="nucleotide sequence ID" value="XM_005245073.4"/>
</dbReference>
<dbReference type="RefSeq" id="XP_011507693.1">
    <molecule id="Q7Z6I6-3"/>
    <property type="nucleotide sequence ID" value="XM_011509391.3"/>
</dbReference>
<dbReference type="RefSeq" id="XP_054191819.1">
    <molecule id="Q7Z6I6-3"/>
    <property type="nucleotide sequence ID" value="XM_054335844.1"/>
</dbReference>
<dbReference type="RefSeq" id="XP_054191820.1">
    <molecule id="Q7Z6I6-3"/>
    <property type="nucleotide sequence ID" value="XM_054335845.1"/>
</dbReference>
<dbReference type="SMR" id="Q7Z6I6"/>
<dbReference type="BioGRID" id="129199">
    <property type="interactions" value="5"/>
</dbReference>
<dbReference type="FunCoup" id="Q7Z6I6">
    <property type="interactions" value="988"/>
</dbReference>
<dbReference type="IntAct" id="Q7Z6I6">
    <property type="interactions" value="7"/>
</dbReference>
<dbReference type="STRING" id="9606.ENSP00000356992"/>
<dbReference type="GlyCosmos" id="Q7Z6I6">
    <property type="glycosylation" value="2 sites, 1 glycan"/>
</dbReference>
<dbReference type="GlyGen" id="Q7Z6I6">
    <property type="glycosylation" value="2 sites, 1 O-linked glycan (2 sites)"/>
</dbReference>
<dbReference type="iPTMnet" id="Q7Z6I6"/>
<dbReference type="PhosphoSitePlus" id="Q7Z6I6"/>
<dbReference type="BioMuta" id="ARHGAP30"/>
<dbReference type="DMDM" id="334302880"/>
<dbReference type="jPOST" id="Q7Z6I6"/>
<dbReference type="MassIVE" id="Q7Z6I6"/>
<dbReference type="PaxDb" id="9606-ENSP00000356992"/>
<dbReference type="PeptideAtlas" id="Q7Z6I6"/>
<dbReference type="ProteomicsDB" id="69411">
    <molecule id="Q7Z6I6-1"/>
</dbReference>
<dbReference type="ProteomicsDB" id="69412">
    <molecule id="Q7Z6I6-2"/>
</dbReference>
<dbReference type="ProteomicsDB" id="69413">
    <molecule id="Q7Z6I6-3"/>
</dbReference>
<dbReference type="ProteomicsDB" id="69414">
    <molecule id="Q7Z6I6-4"/>
</dbReference>
<dbReference type="Antibodypedia" id="34287">
    <property type="antibodies" value="101 antibodies from 26 providers"/>
</dbReference>
<dbReference type="DNASU" id="257106"/>
<dbReference type="Ensembl" id="ENST00000368013.8">
    <molecule id="Q7Z6I6-1"/>
    <property type="protein sequence ID" value="ENSP00000356992.3"/>
    <property type="gene ID" value="ENSG00000186517.14"/>
</dbReference>
<dbReference type="GeneID" id="257106"/>
<dbReference type="KEGG" id="hsa:257106"/>
<dbReference type="MANE-Select" id="ENST00000368013.8">
    <property type="protein sequence ID" value="ENSP00000356992.3"/>
    <property type="RefSeq nucleotide sequence ID" value="NM_001025598.2"/>
    <property type="RefSeq protein sequence ID" value="NP_001020769.1"/>
</dbReference>
<dbReference type="UCSC" id="uc001fxl.4">
    <molecule id="Q7Z6I6-1"/>
    <property type="organism name" value="human"/>
</dbReference>
<dbReference type="AGR" id="HGNC:27414"/>
<dbReference type="CTD" id="257106"/>
<dbReference type="DisGeNET" id="257106"/>
<dbReference type="GeneCards" id="ARHGAP30"/>
<dbReference type="HGNC" id="HGNC:27414">
    <property type="gene designation" value="ARHGAP30"/>
</dbReference>
<dbReference type="HPA" id="ENSG00000186517">
    <property type="expression patterns" value="Tissue enhanced (bone marrow, lymphoid tissue)"/>
</dbReference>
<dbReference type="MIM" id="614264">
    <property type="type" value="gene"/>
</dbReference>
<dbReference type="neXtProt" id="NX_Q7Z6I6"/>
<dbReference type="OpenTargets" id="ENSG00000186517"/>
<dbReference type="PharmGKB" id="PA142672585"/>
<dbReference type="VEuPathDB" id="HostDB:ENSG00000186517"/>
<dbReference type="eggNOG" id="KOG1449">
    <property type="taxonomic scope" value="Eukaryota"/>
</dbReference>
<dbReference type="GeneTree" id="ENSGT00940000161411"/>
<dbReference type="InParanoid" id="Q7Z6I6"/>
<dbReference type="OMA" id="VGCDLCP"/>
<dbReference type="OrthoDB" id="79452at2759"/>
<dbReference type="PAN-GO" id="Q7Z6I6">
    <property type="GO annotations" value="2 GO annotations based on evolutionary models"/>
</dbReference>
<dbReference type="PhylomeDB" id="Q7Z6I6"/>
<dbReference type="TreeFam" id="TF351451"/>
<dbReference type="PathwayCommons" id="Q7Z6I6"/>
<dbReference type="Reactome" id="R-HSA-8980692">
    <property type="pathway name" value="RHOA GTPase cycle"/>
</dbReference>
<dbReference type="Reactome" id="R-HSA-9013148">
    <property type="pathway name" value="CDC42 GTPase cycle"/>
</dbReference>
<dbReference type="Reactome" id="R-HSA-9013149">
    <property type="pathway name" value="RAC1 GTPase cycle"/>
</dbReference>
<dbReference type="Reactome" id="R-HSA-9013420">
    <property type="pathway name" value="RHOU GTPase cycle"/>
</dbReference>
<dbReference type="SignaLink" id="Q7Z6I6"/>
<dbReference type="SIGNOR" id="Q7Z6I6"/>
<dbReference type="BioGRID-ORCS" id="257106">
    <property type="hits" value="18 hits in 1143 CRISPR screens"/>
</dbReference>
<dbReference type="ChiTaRS" id="ARHGAP30">
    <property type="organism name" value="human"/>
</dbReference>
<dbReference type="GenomeRNAi" id="257106"/>
<dbReference type="Pharos" id="Q7Z6I6">
    <property type="development level" value="Tbio"/>
</dbReference>
<dbReference type="PRO" id="PR:Q7Z6I6"/>
<dbReference type="Proteomes" id="UP000005640">
    <property type="component" value="Chromosome 1"/>
</dbReference>
<dbReference type="RNAct" id="Q7Z6I6">
    <property type="molecule type" value="protein"/>
</dbReference>
<dbReference type="Bgee" id="ENSG00000186517">
    <property type="expression patterns" value="Expressed in granulocyte and 186 other cell types or tissues"/>
</dbReference>
<dbReference type="ExpressionAtlas" id="Q7Z6I6">
    <property type="expression patterns" value="baseline and differential"/>
</dbReference>
<dbReference type="GO" id="GO:0031410">
    <property type="term" value="C:cytoplasmic vesicle"/>
    <property type="evidence" value="ECO:0007669"/>
    <property type="project" value="UniProtKB-KW"/>
</dbReference>
<dbReference type="GO" id="GO:0005829">
    <property type="term" value="C:cytosol"/>
    <property type="evidence" value="ECO:0000304"/>
    <property type="project" value="Reactome"/>
</dbReference>
<dbReference type="GO" id="GO:0043231">
    <property type="term" value="C:intracellular membrane-bounded organelle"/>
    <property type="evidence" value="ECO:0000314"/>
    <property type="project" value="HPA"/>
</dbReference>
<dbReference type="GO" id="GO:0005096">
    <property type="term" value="F:GTPase activator activity"/>
    <property type="evidence" value="ECO:0000314"/>
    <property type="project" value="UniProtKB"/>
</dbReference>
<dbReference type="GO" id="GO:0035024">
    <property type="term" value="P:negative regulation of Rho protein signal transduction"/>
    <property type="evidence" value="ECO:0000314"/>
    <property type="project" value="UniProtKB"/>
</dbReference>
<dbReference type="GO" id="GO:0051056">
    <property type="term" value="P:regulation of small GTPase mediated signal transduction"/>
    <property type="evidence" value="ECO:0000304"/>
    <property type="project" value="Reactome"/>
</dbReference>
<dbReference type="GO" id="GO:0007264">
    <property type="term" value="P:small GTPase-mediated signal transduction"/>
    <property type="evidence" value="ECO:0000318"/>
    <property type="project" value="GO_Central"/>
</dbReference>
<dbReference type="CDD" id="cd04384">
    <property type="entry name" value="RhoGAP_CdGAP"/>
    <property type="match status" value="1"/>
</dbReference>
<dbReference type="FunFam" id="1.10.555.10:FF:000002">
    <property type="entry name" value="rho GTPase-activating protein 32 isoform X1"/>
    <property type="match status" value="1"/>
</dbReference>
<dbReference type="Gene3D" id="1.10.555.10">
    <property type="entry name" value="Rho GTPase activation protein"/>
    <property type="match status" value="1"/>
</dbReference>
<dbReference type="InterPro" id="IPR051576">
    <property type="entry name" value="PX-Rho_GAP"/>
</dbReference>
<dbReference type="InterPro" id="IPR008936">
    <property type="entry name" value="Rho_GTPase_activation_prot"/>
</dbReference>
<dbReference type="InterPro" id="IPR000198">
    <property type="entry name" value="RhoGAP_dom"/>
</dbReference>
<dbReference type="PANTHER" id="PTHR15729">
    <property type="entry name" value="CDC42 GTPASE-ACTIVATING PROTEIN"/>
    <property type="match status" value="1"/>
</dbReference>
<dbReference type="PANTHER" id="PTHR15729:SF12">
    <property type="entry name" value="RHO GTPASE-ACTIVATING PROTEIN 30"/>
    <property type="match status" value="1"/>
</dbReference>
<dbReference type="Pfam" id="PF00620">
    <property type="entry name" value="RhoGAP"/>
    <property type="match status" value="1"/>
</dbReference>
<dbReference type="SMART" id="SM00324">
    <property type="entry name" value="RhoGAP"/>
    <property type="match status" value="1"/>
</dbReference>
<dbReference type="SUPFAM" id="SSF48350">
    <property type="entry name" value="GTPase activation domain, GAP"/>
    <property type="match status" value="1"/>
</dbReference>
<dbReference type="PROSITE" id="PS50238">
    <property type="entry name" value="RHOGAP"/>
    <property type="match status" value="1"/>
</dbReference>
<feature type="chain" id="PRO_0000280478" description="Rho GTPase-activating protein 30">
    <location>
        <begin position="1"/>
        <end position="1101"/>
    </location>
</feature>
<feature type="domain" description="Rho-GAP" evidence="1">
    <location>
        <begin position="20"/>
        <end position="215"/>
    </location>
</feature>
<feature type="region of interest" description="Disordered" evidence="2">
    <location>
        <begin position="224"/>
        <end position="243"/>
    </location>
</feature>
<feature type="region of interest" description="Disordered" evidence="2">
    <location>
        <begin position="300"/>
        <end position="400"/>
    </location>
</feature>
<feature type="region of interest" description="Disordered" evidence="2">
    <location>
        <begin position="451"/>
        <end position="529"/>
    </location>
</feature>
<feature type="region of interest" description="Disordered" evidence="2">
    <location>
        <begin position="621"/>
        <end position="906"/>
    </location>
</feature>
<feature type="region of interest" description="Disordered" evidence="2">
    <location>
        <begin position="965"/>
        <end position="991"/>
    </location>
</feature>
<feature type="region of interest" description="Disordered" evidence="2">
    <location>
        <begin position="1050"/>
        <end position="1101"/>
    </location>
</feature>
<feature type="compositionally biased region" description="Basic and acidic residues" evidence="2">
    <location>
        <begin position="308"/>
        <end position="318"/>
    </location>
</feature>
<feature type="compositionally biased region" description="Acidic residues" evidence="2">
    <location>
        <begin position="360"/>
        <end position="376"/>
    </location>
</feature>
<feature type="compositionally biased region" description="Pro residues" evidence="2">
    <location>
        <begin position="459"/>
        <end position="472"/>
    </location>
</feature>
<feature type="compositionally biased region" description="Low complexity" evidence="2">
    <location>
        <begin position="508"/>
        <end position="520"/>
    </location>
</feature>
<feature type="compositionally biased region" description="Basic and acidic residues" evidence="2">
    <location>
        <begin position="658"/>
        <end position="694"/>
    </location>
</feature>
<feature type="compositionally biased region" description="Basic and acidic residues" evidence="2">
    <location>
        <begin position="701"/>
        <end position="735"/>
    </location>
</feature>
<feature type="compositionally biased region" description="Basic and acidic residues" evidence="2">
    <location>
        <begin position="759"/>
        <end position="770"/>
    </location>
</feature>
<feature type="compositionally biased region" description="Basic and acidic residues" evidence="2">
    <location>
        <begin position="779"/>
        <end position="822"/>
    </location>
</feature>
<feature type="compositionally biased region" description="Low complexity" evidence="2">
    <location>
        <begin position="976"/>
        <end position="991"/>
    </location>
</feature>
<feature type="compositionally biased region" description="Low complexity" evidence="2">
    <location>
        <begin position="1053"/>
        <end position="1069"/>
    </location>
</feature>
<feature type="compositionally biased region" description="Polar residues" evidence="2">
    <location>
        <begin position="1080"/>
        <end position="1094"/>
    </location>
</feature>
<feature type="site" description="Arginine finger; crucial for GTP hydrolysis by stabilizing the transition state" evidence="1">
    <location>
        <position position="55"/>
    </location>
</feature>
<feature type="modified residue" description="Phosphoserine" evidence="10">
    <location>
        <position position="576"/>
    </location>
</feature>
<feature type="modified residue" description="Phosphoserine" evidence="9">
    <location>
        <position position="996"/>
    </location>
</feature>
<feature type="splice variant" id="VSP_023732" description="In isoform 3." evidence="6">
    <location>
        <begin position="1"/>
        <end position="148"/>
    </location>
</feature>
<feature type="splice variant" id="VSP_023733" description="In isoform 4." evidence="7">
    <original>GEVESGWRSLPGTRASGSPED</original>
    <variation>QCPPCPPHIPLLGSQVSYSEP</variation>
    <location>
        <begin position="223"/>
        <end position="243"/>
    </location>
</feature>
<feature type="splice variant" id="VSP_023734" description="In isoform 4." evidence="7">
    <location>
        <begin position="244"/>
        <end position="1101"/>
    </location>
</feature>
<feature type="splice variant" id="VSP_023735" description="In isoform 2." evidence="6">
    <location>
        <begin position="679"/>
        <end position="889"/>
    </location>
</feature>
<feature type="sequence variant" id="VAR_031157" description="In dbSNP:rs17854839." evidence="3">
    <original>F</original>
    <variation>L</variation>
    <location>
        <position position="70"/>
    </location>
</feature>
<feature type="sequence variant" id="VAR_031158" description="In dbSNP:rs3813609." evidence="3 4">
    <original>L</original>
    <variation>V</variation>
    <location>
        <position position="591"/>
    </location>
</feature>
<feature type="sequence conflict" description="In Ref. 1; BAD18709." evidence="8" ref="1">
    <original>S</original>
    <variation>P</variation>
    <location>
        <position position="1034"/>
    </location>
</feature>
<comment type="function">
    <text evidence="5">GTPase-activating protein (GAP) for RAC1 and RHOA, but not for CDC42.</text>
</comment>
<comment type="subunit">
    <text evidence="5">Interacts with RHOU in a GTP-independent manner.</text>
</comment>
<comment type="interaction">
    <interactant intactId="EBI-2814810">
        <id>Q7Z6I6</id>
    </interactant>
    <interactant intactId="EBI-1638043">
        <id>Q7L0Q8</id>
        <label>RHOU</label>
    </interactant>
    <organismsDiffer>false</organismsDiffer>
    <experiments>2</experiments>
</comment>
<comment type="interaction">
    <interactant intactId="EBI-26970905">
        <id>Q7Z6I6-2</id>
    </interactant>
    <interactant intactId="EBI-1638043">
        <id>Q7L0Q8</id>
        <label>RHOU</label>
    </interactant>
    <organismsDiffer>false</organismsDiffer>
    <experiments>3</experiments>
</comment>
<comment type="subcellular location">
    <subcellularLocation>
        <location evidence="5">Cytoplasmic vesicle</location>
    </subcellularLocation>
</comment>
<comment type="alternative products">
    <event type="alternative splicing"/>
    <isoform>
        <id>Q7Z6I6-1</id>
        <name>1</name>
        <name>L-ARHGAP30</name>
        <name>L-30</name>
        <sequence type="displayed"/>
    </isoform>
    <isoform>
        <id>Q7Z6I6-2</id>
        <name>2</name>
        <name>S-ARHGAP30</name>
        <name>S-30</name>
        <sequence type="described" ref="VSP_023735"/>
    </isoform>
    <isoform>
        <id>Q7Z6I6-3</id>
        <name>3</name>
        <sequence type="described" ref="VSP_023732"/>
    </isoform>
    <isoform>
        <id>Q7Z6I6-4</id>
        <name>4</name>
        <sequence type="described" ref="VSP_023733 VSP_023734"/>
    </isoform>
</comment>
<comment type="sequence caution" evidence="8">
    <conflict type="miscellaneous discrepancy">
        <sequence resource="EMBL-CDS" id="AAH43387"/>
    </conflict>
    <text>Contaminating sequence. Potential poly-A sequence.</text>
</comment>
<comment type="sequence caution" evidence="8">
    <conflict type="erroneous initiation">
        <sequence resource="EMBL-CDS" id="BAD18709"/>
    </conflict>
    <text>Extended N-terminus.</text>
</comment>
<name>RHG30_HUMAN</name>
<organism>
    <name type="scientific">Homo sapiens</name>
    <name type="common">Human</name>
    <dbReference type="NCBI Taxonomy" id="9606"/>
    <lineage>
        <taxon>Eukaryota</taxon>
        <taxon>Metazoa</taxon>
        <taxon>Chordata</taxon>
        <taxon>Craniata</taxon>
        <taxon>Vertebrata</taxon>
        <taxon>Euteleostomi</taxon>
        <taxon>Mammalia</taxon>
        <taxon>Eutheria</taxon>
        <taxon>Euarchontoglires</taxon>
        <taxon>Primates</taxon>
        <taxon>Haplorrhini</taxon>
        <taxon>Catarrhini</taxon>
        <taxon>Hominidae</taxon>
        <taxon>Homo</taxon>
    </lineage>
</organism>
<reference key="1">
    <citation type="submission" date="2004-04" db="EMBL/GenBank/DDBJ databases">
        <title>The nucleotide sequence of a long cDNA clone isolated from human spleen.</title>
        <authorList>
            <person name="Jikuya H."/>
            <person name="Takano J."/>
            <person name="Nomura N."/>
            <person name="Kikuno R."/>
            <person name="Nagase T."/>
            <person name="Ohara O."/>
        </authorList>
    </citation>
    <scope>NUCLEOTIDE SEQUENCE [LARGE SCALE MRNA] (ISOFORM 1)</scope>
    <source>
        <tissue>Spleen</tissue>
    </source>
</reference>
<reference key="2">
    <citation type="journal article" date="2007" name="BMC Genomics">
        <title>The full-ORF clone resource of the German cDNA consortium.</title>
        <authorList>
            <person name="Bechtel S."/>
            <person name="Rosenfelder H."/>
            <person name="Duda A."/>
            <person name="Schmidt C.P."/>
            <person name="Ernst U."/>
            <person name="Wellenreuther R."/>
            <person name="Mehrle A."/>
            <person name="Schuster C."/>
            <person name="Bahr A."/>
            <person name="Bloecker H."/>
            <person name="Heubner D."/>
            <person name="Hoerlein A."/>
            <person name="Michel G."/>
            <person name="Wedler H."/>
            <person name="Koehrer K."/>
            <person name="Ottenwaelder B."/>
            <person name="Poustka A."/>
            <person name="Wiemann S."/>
            <person name="Schupp I."/>
        </authorList>
    </citation>
    <scope>NUCLEOTIDE SEQUENCE [LARGE SCALE MRNA] (ISOFORM 4)</scope>
    <scope>VARIANT VAL-591</scope>
    <source>
        <tissue>Endometrium</tissue>
    </source>
</reference>
<reference key="3">
    <citation type="journal article" date="2006" name="Nature">
        <title>The DNA sequence and biological annotation of human chromosome 1.</title>
        <authorList>
            <person name="Gregory S.G."/>
            <person name="Barlow K.F."/>
            <person name="McLay K.E."/>
            <person name="Kaul R."/>
            <person name="Swarbreck D."/>
            <person name="Dunham A."/>
            <person name="Scott C.E."/>
            <person name="Howe K.L."/>
            <person name="Woodfine K."/>
            <person name="Spencer C.C.A."/>
            <person name="Jones M.C."/>
            <person name="Gillson C."/>
            <person name="Searle S."/>
            <person name="Zhou Y."/>
            <person name="Kokocinski F."/>
            <person name="McDonald L."/>
            <person name="Evans R."/>
            <person name="Phillips K."/>
            <person name="Atkinson A."/>
            <person name="Cooper R."/>
            <person name="Jones C."/>
            <person name="Hall R.E."/>
            <person name="Andrews T.D."/>
            <person name="Lloyd C."/>
            <person name="Ainscough R."/>
            <person name="Almeida J.P."/>
            <person name="Ambrose K.D."/>
            <person name="Anderson F."/>
            <person name="Andrew R.W."/>
            <person name="Ashwell R.I.S."/>
            <person name="Aubin K."/>
            <person name="Babbage A.K."/>
            <person name="Bagguley C.L."/>
            <person name="Bailey J."/>
            <person name="Beasley H."/>
            <person name="Bethel G."/>
            <person name="Bird C.P."/>
            <person name="Bray-Allen S."/>
            <person name="Brown J.Y."/>
            <person name="Brown A.J."/>
            <person name="Buckley D."/>
            <person name="Burton J."/>
            <person name="Bye J."/>
            <person name="Carder C."/>
            <person name="Chapman J.C."/>
            <person name="Clark S.Y."/>
            <person name="Clarke G."/>
            <person name="Clee C."/>
            <person name="Cobley V."/>
            <person name="Collier R.E."/>
            <person name="Corby N."/>
            <person name="Coville G.J."/>
            <person name="Davies J."/>
            <person name="Deadman R."/>
            <person name="Dunn M."/>
            <person name="Earthrowl M."/>
            <person name="Ellington A.G."/>
            <person name="Errington H."/>
            <person name="Frankish A."/>
            <person name="Frankland J."/>
            <person name="French L."/>
            <person name="Garner P."/>
            <person name="Garnett J."/>
            <person name="Gay L."/>
            <person name="Ghori M.R.J."/>
            <person name="Gibson R."/>
            <person name="Gilby L.M."/>
            <person name="Gillett W."/>
            <person name="Glithero R.J."/>
            <person name="Grafham D.V."/>
            <person name="Griffiths C."/>
            <person name="Griffiths-Jones S."/>
            <person name="Grocock R."/>
            <person name="Hammond S."/>
            <person name="Harrison E.S.I."/>
            <person name="Hart E."/>
            <person name="Haugen E."/>
            <person name="Heath P.D."/>
            <person name="Holmes S."/>
            <person name="Holt K."/>
            <person name="Howden P.J."/>
            <person name="Hunt A.R."/>
            <person name="Hunt S.E."/>
            <person name="Hunter G."/>
            <person name="Isherwood J."/>
            <person name="James R."/>
            <person name="Johnson C."/>
            <person name="Johnson D."/>
            <person name="Joy A."/>
            <person name="Kay M."/>
            <person name="Kershaw J.K."/>
            <person name="Kibukawa M."/>
            <person name="Kimberley A.M."/>
            <person name="King A."/>
            <person name="Knights A.J."/>
            <person name="Lad H."/>
            <person name="Laird G."/>
            <person name="Lawlor S."/>
            <person name="Leongamornlert D.A."/>
            <person name="Lloyd D.M."/>
            <person name="Loveland J."/>
            <person name="Lovell J."/>
            <person name="Lush M.J."/>
            <person name="Lyne R."/>
            <person name="Martin S."/>
            <person name="Mashreghi-Mohammadi M."/>
            <person name="Matthews L."/>
            <person name="Matthews N.S.W."/>
            <person name="McLaren S."/>
            <person name="Milne S."/>
            <person name="Mistry S."/>
            <person name="Moore M.J.F."/>
            <person name="Nickerson T."/>
            <person name="O'Dell C.N."/>
            <person name="Oliver K."/>
            <person name="Palmeiri A."/>
            <person name="Palmer S.A."/>
            <person name="Parker A."/>
            <person name="Patel D."/>
            <person name="Pearce A.V."/>
            <person name="Peck A.I."/>
            <person name="Pelan S."/>
            <person name="Phelps K."/>
            <person name="Phillimore B.J."/>
            <person name="Plumb R."/>
            <person name="Rajan J."/>
            <person name="Raymond C."/>
            <person name="Rouse G."/>
            <person name="Saenphimmachak C."/>
            <person name="Sehra H.K."/>
            <person name="Sheridan E."/>
            <person name="Shownkeen R."/>
            <person name="Sims S."/>
            <person name="Skuce C.D."/>
            <person name="Smith M."/>
            <person name="Steward C."/>
            <person name="Subramanian S."/>
            <person name="Sycamore N."/>
            <person name="Tracey A."/>
            <person name="Tromans A."/>
            <person name="Van Helmond Z."/>
            <person name="Wall M."/>
            <person name="Wallis J.M."/>
            <person name="White S."/>
            <person name="Whitehead S.L."/>
            <person name="Wilkinson J.E."/>
            <person name="Willey D.L."/>
            <person name="Williams H."/>
            <person name="Wilming L."/>
            <person name="Wray P.W."/>
            <person name="Wu Z."/>
            <person name="Coulson A."/>
            <person name="Vaudin M."/>
            <person name="Sulston J.E."/>
            <person name="Durbin R.M."/>
            <person name="Hubbard T."/>
            <person name="Wooster R."/>
            <person name="Dunham I."/>
            <person name="Carter N.P."/>
            <person name="McVean G."/>
            <person name="Ross M.T."/>
            <person name="Harrow J."/>
            <person name="Olson M.V."/>
            <person name="Beck S."/>
            <person name="Rogers J."/>
            <person name="Bentley D.R."/>
        </authorList>
    </citation>
    <scope>NUCLEOTIDE SEQUENCE [LARGE SCALE GENOMIC DNA]</scope>
</reference>
<reference key="4">
    <citation type="journal article" date="2004" name="Genome Res.">
        <title>The status, quality, and expansion of the NIH full-length cDNA project: the Mammalian Gene Collection (MGC).</title>
        <authorList>
            <consortium name="The MGC Project Team"/>
        </authorList>
    </citation>
    <scope>NUCLEOTIDE SEQUENCE [LARGE SCALE MRNA] (ISOFORM 2)</scope>
    <scope>NUCLEOTIDE SEQUENCE [LARGE SCALE MRNA] OF 1-744 (ISOFORM 3)</scope>
    <scope>VARIANTS LEU-70 AND VAL-591</scope>
    <source>
        <tissue>Blood</tissue>
        <tissue>Testis</tissue>
    </source>
</reference>
<reference key="5">
    <citation type="journal article" date="2004" name="Anal. Chem.">
        <title>Robust phosphoproteomic profiling of tyrosine phosphorylation sites from human T cells using immobilized metal affinity chromatography and tandem mass spectrometry.</title>
        <authorList>
            <person name="Brill L.M."/>
            <person name="Salomon A.R."/>
            <person name="Ficarro S.B."/>
            <person name="Mukherji M."/>
            <person name="Stettler-Gill M."/>
            <person name="Peters E.C."/>
        </authorList>
    </citation>
    <scope>IDENTIFICATION BY MASS SPECTROMETRY [LARGE SCALE ANALYSIS]</scope>
    <source>
        <tissue>Leukemic T-cell</tissue>
    </source>
</reference>
<reference key="6">
    <citation type="journal article" date="2009" name="Sci. Signal.">
        <title>Quantitative phosphoproteomic analysis of T cell receptor signaling reveals system-wide modulation of protein-protein interactions.</title>
        <authorList>
            <person name="Mayya V."/>
            <person name="Lundgren D.H."/>
            <person name="Hwang S.-I."/>
            <person name="Rezaul K."/>
            <person name="Wu L."/>
            <person name="Eng J.K."/>
            <person name="Rodionov V."/>
            <person name="Han D.K."/>
        </authorList>
    </citation>
    <scope>PHOSPHORYLATION [LARGE SCALE ANALYSIS] AT SER-996</scope>
    <scope>IDENTIFICATION BY MASS SPECTROMETRY [LARGE SCALE ANALYSIS]</scope>
    <source>
        <tissue>Leukemic T-cell</tissue>
    </source>
</reference>
<reference key="7">
    <citation type="journal article" date="2011" name="BMC Syst. Biol.">
        <title>Initial characterization of the human central proteome.</title>
        <authorList>
            <person name="Burkard T.R."/>
            <person name="Planyavsky M."/>
            <person name="Kaupe I."/>
            <person name="Breitwieser F.P."/>
            <person name="Buerckstuemmer T."/>
            <person name="Bennett K.L."/>
            <person name="Superti-Furga G."/>
            <person name="Colinge J."/>
        </authorList>
    </citation>
    <scope>IDENTIFICATION BY MASS SPECTROMETRY [LARGE SCALE ANALYSIS]</scope>
</reference>
<reference key="8">
    <citation type="journal article" date="2011" name="Biochem. Biophys. Res. Commun.">
        <title>ARHGAP30 is a Wrch-1-interacting protein involved in actin dynamics and cell adhesion.</title>
        <authorList>
            <person name="Naji L."/>
            <person name="Pacholsky D."/>
            <person name="Aspenstrom P."/>
        </authorList>
    </citation>
    <scope>FUNCTION</scope>
    <scope>INTERACTION WITH RHOU</scope>
    <scope>SUBCELLULAR LOCATION</scope>
    <scope>ALTERNATIVE SPLICING (ISOFORMS 1 AND 2)</scope>
</reference>
<reference key="9">
    <citation type="journal article" date="2014" name="J. Proteomics">
        <title>An enzyme assisted RP-RPLC approach for in-depth analysis of human liver phosphoproteome.</title>
        <authorList>
            <person name="Bian Y."/>
            <person name="Song C."/>
            <person name="Cheng K."/>
            <person name="Dong M."/>
            <person name="Wang F."/>
            <person name="Huang J."/>
            <person name="Sun D."/>
            <person name="Wang L."/>
            <person name="Ye M."/>
            <person name="Zou H."/>
        </authorList>
    </citation>
    <scope>PHOSPHORYLATION [LARGE SCALE ANALYSIS] AT SER-576</scope>
    <scope>IDENTIFICATION BY MASS SPECTROMETRY [LARGE SCALE ANALYSIS]</scope>
    <source>
        <tissue>Liver</tissue>
    </source>
</reference>
<accession>Q7Z6I6</accession>
<accession>Q5SY52</accession>
<accession>Q5SY53</accession>
<accession>Q5SY54</accession>
<accession>Q6ZML6</accession>
<accession>Q7Z3J8</accession>
<accession>Q86XI7</accession>
<evidence type="ECO:0000255" key="1">
    <source>
        <dbReference type="PROSITE-ProRule" id="PRU00172"/>
    </source>
</evidence>
<evidence type="ECO:0000256" key="2">
    <source>
        <dbReference type="SAM" id="MobiDB-lite"/>
    </source>
</evidence>
<evidence type="ECO:0000269" key="3">
    <source>
    </source>
</evidence>
<evidence type="ECO:0000269" key="4">
    <source>
    </source>
</evidence>
<evidence type="ECO:0000269" key="5">
    <source>
    </source>
</evidence>
<evidence type="ECO:0000303" key="6">
    <source>
    </source>
</evidence>
<evidence type="ECO:0000303" key="7">
    <source>
    </source>
</evidence>
<evidence type="ECO:0000305" key="8"/>
<evidence type="ECO:0007744" key="9">
    <source>
    </source>
</evidence>
<evidence type="ECO:0007744" key="10">
    <source>
    </source>
</evidence>
<keyword id="KW-0025">Alternative splicing</keyword>
<keyword id="KW-0968">Cytoplasmic vesicle</keyword>
<keyword id="KW-0343">GTPase activation</keyword>
<keyword id="KW-0597">Phosphoprotein</keyword>
<keyword id="KW-1267">Proteomics identification</keyword>
<keyword id="KW-1185">Reference proteome</keyword>
<protein>
    <recommendedName>
        <fullName>Rho GTPase-activating protein 30</fullName>
    </recommendedName>
    <alternativeName>
        <fullName>Rho-type GTPase-activating protein 30</fullName>
    </alternativeName>
</protein>
<gene>
    <name type="primary">ARHGAP30</name>
</gene>
<proteinExistence type="evidence at protein level"/>